<name>VF349_IIV6</name>
<evidence type="ECO:0000255" key="1">
    <source>
        <dbReference type="PROSITE-ProRule" id="PRU00472"/>
    </source>
</evidence>
<evidence type="ECO:0000305" key="2"/>
<gene>
    <name type="ORF">IIV6-349L</name>
</gene>
<feature type="chain" id="PRO_0000377767" description="Putative transcription elongation factor S-II-like protein 349L">
    <location>
        <begin position="1"/>
        <end position="140"/>
    </location>
</feature>
<feature type="zinc finger region" description="TFIIS-type" evidence="1">
    <location>
        <begin position="100"/>
        <end position="139"/>
    </location>
</feature>
<feature type="binding site" evidence="1">
    <location>
        <position position="104"/>
    </location>
    <ligand>
        <name>Zn(2+)</name>
        <dbReference type="ChEBI" id="CHEBI:29105"/>
    </ligand>
</feature>
<feature type="binding site" evidence="1">
    <location>
        <position position="106"/>
    </location>
    <ligand>
        <name>Zn(2+)</name>
        <dbReference type="ChEBI" id="CHEBI:29105"/>
    </ligand>
</feature>
<feature type="binding site" evidence="1">
    <location>
        <position position="131"/>
    </location>
    <ligand>
        <name>Zn(2+)</name>
        <dbReference type="ChEBI" id="CHEBI:29105"/>
    </ligand>
</feature>
<feature type="binding site" evidence="1">
    <location>
        <position position="134"/>
    </location>
    <ligand>
        <name>Zn(2+)</name>
        <dbReference type="ChEBI" id="CHEBI:29105"/>
    </ligand>
</feature>
<reference key="1">
    <citation type="journal article" date="2001" name="Virology">
        <title>Analysis of the first complete DNA sequence of an invertebrate iridovirus: coding strategy of the genome of Chilo iridescent virus.</title>
        <authorList>
            <person name="Jakob N.J."/>
            <person name="Mueller K."/>
            <person name="Bahr U."/>
            <person name="Darai G."/>
        </authorList>
    </citation>
    <scope>NUCLEOTIDE SEQUENCE [LARGE SCALE GENOMIC DNA]</scope>
</reference>
<reference key="2">
    <citation type="journal article" date="2007" name="Virol. J.">
        <title>Comparative genomic analysis of the family Iridoviridae: re-annotating and defining the core set of iridovirus genes.</title>
        <authorList>
            <person name="Eaton H.E."/>
            <person name="Metcalf J."/>
            <person name="Penny E."/>
            <person name="Tcherepanov V."/>
            <person name="Upton C."/>
            <person name="Brunetti C.R."/>
        </authorList>
    </citation>
    <scope>GENOME REANNOTATION</scope>
</reference>
<keyword id="KW-0479">Metal-binding</keyword>
<keyword id="KW-1185">Reference proteome</keyword>
<keyword id="KW-0862">Zinc</keyword>
<keyword id="KW-0863">Zinc-finger</keyword>
<accession>Q91FH5</accession>
<proteinExistence type="inferred from homology"/>
<comment type="similarity">
    <text evidence="2">Belongs to the IIV-6 349L family.</text>
</comment>
<dbReference type="EMBL" id="AF303741">
    <property type="protein sequence ID" value="AAK82210.1"/>
    <property type="molecule type" value="Genomic_DNA"/>
</dbReference>
<dbReference type="RefSeq" id="NP_149812.1">
    <property type="nucleotide sequence ID" value="NC_003038.1"/>
</dbReference>
<dbReference type="SMR" id="Q91FH5"/>
<dbReference type="KEGG" id="vg:1733013"/>
<dbReference type="OrthoDB" id="23494at10239"/>
<dbReference type="Proteomes" id="UP000001359">
    <property type="component" value="Genome"/>
</dbReference>
<dbReference type="GO" id="GO:0003676">
    <property type="term" value="F:nucleic acid binding"/>
    <property type="evidence" value="ECO:0007669"/>
    <property type="project" value="InterPro"/>
</dbReference>
<dbReference type="GO" id="GO:0008270">
    <property type="term" value="F:zinc ion binding"/>
    <property type="evidence" value="ECO:0007669"/>
    <property type="project" value="UniProtKB-KW"/>
</dbReference>
<dbReference type="GO" id="GO:0006351">
    <property type="term" value="P:DNA-templated transcription"/>
    <property type="evidence" value="ECO:0007669"/>
    <property type="project" value="InterPro"/>
</dbReference>
<dbReference type="Gene3D" id="2.20.25.10">
    <property type="match status" value="1"/>
</dbReference>
<dbReference type="InterPro" id="IPR001222">
    <property type="entry name" value="Znf_TFIIS"/>
</dbReference>
<dbReference type="Pfam" id="PF01096">
    <property type="entry name" value="Zn_ribbon_TFIIS"/>
    <property type="match status" value="1"/>
</dbReference>
<dbReference type="SMART" id="SM00440">
    <property type="entry name" value="ZnF_C2C2"/>
    <property type="match status" value="1"/>
</dbReference>
<dbReference type="SUPFAM" id="SSF57783">
    <property type="entry name" value="Zinc beta-ribbon"/>
    <property type="match status" value="1"/>
</dbReference>
<dbReference type="PROSITE" id="PS51133">
    <property type="entry name" value="ZF_TFIIS_2"/>
    <property type="match status" value="1"/>
</dbReference>
<organismHost>
    <name type="scientific">Acheta domesticus</name>
    <name type="common">House cricket</name>
    <dbReference type="NCBI Taxonomy" id="6997"/>
</organismHost>
<organismHost>
    <name type="scientific">Chilo suppressalis</name>
    <name type="common">Asiatic rice borer moth</name>
    <dbReference type="NCBI Taxonomy" id="168631"/>
</organismHost>
<organismHost>
    <name type="scientific">Gryllus bimaculatus</name>
    <name type="common">Two-spotted cricket</name>
    <dbReference type="NCBI Taxonomy" id="6999"/>
</organismHost>
<organismHost>
    <name type="scientific">Gryllus campestris</name>
    <dbReference type="NCBI Taxonomy" id="58607"/>
</organismHost>
<organismHost>
    <name type="scientific">Spodoptera frugiperda</name>
    <name type="common">Fall armyworm</name>
    <dbReference type="NCBI Taxonomy" id="7108"/>
</organismHost>
<protein>
    <recommendedName>
        <fullName>Putative transcription elongation factor S-II-like protein 349L</fullName>
    </recommendedName>
</protein>
<sequence>MDLALKVKILKMLCKYLTNKNNISLFFNILTNIPNGDDYMFECVQHFIQMKNSNECDINDLFLKLKSQLLVWQDSSFEQFLKIEKEEDNFLESPLEVAEGAIKCKCGSERVFSFSKQTRSGDESTSVFALCSSCKSKWVL</sequence>
<organism>
    <name type="scientific">Invertebrate iridescent virus 6</name>
    <name type="common">IIV-6</name>
    <name type="synonym">Chilo iridescent virus</name>
    <dbReference type="NCBI Taxonomy" id="176652"/>
    <lineage>
        <taxon>Viruses</taxon>
        <taxon>Varidnaviria</taxon>
        <taxon>Bamfordvirae</taxon>
        <taxon>Nucleocytoviricota</taxon>
        <taxon>Megaviricetes</taxon>
        <taxon>Pimascovirales</taxon>
        <taxon>Iridoviridae</taxon>
        <taxon>Betairidovirinae</taxon>
        <taxon>Iridovirus</taxon>
    </lineage>
</organism>